<reference key="1">
    <citation type="submission" date="2001-11" db="EMBL/GenBank/DDBJ databases">
        <authorList>
            <person name="An W.F."/>
            <person name="Cao J."/>
            <person name="Jurman M.E."/>
            <person name="Holmqvist M.H."/>
            <person name="Distefano P.S."/>
        </authorList>
    </citation>
    <scope>NUCLEOTIDE SEQUENCE [MRNA]</scope>
</reference>
<evidence type="ECO:0000250" key="1"/>
<evidence type="ECO:0000250" key="2">
    <source>
        <dbReference type="UniProtKB" id="Q6PHZ8"/>
    </source>
</evidence>
<evidence type="ECO:0000250" key="3">
    <source>
        <dbReference type="UniProtKB" id="Q6PIL6"/>
    </source>
</evidence>
<evidence type="ECO:0000250" key="4">
    <source>
        <dbReference type="UniProtKB" id="Q8R426"/>
    </source>
</evidence>
<evidence type="ECO:0000255" key="5">
    <source>
        <dbReference type="PROSITE-ProRule" id="PRU00448"/>
    </source>
</evidence>
<evidence type="ECO:0000305" key="6"/>
<sequence length="250" mass="28729">MNVRRVESISAQLEEASSTGGFLYAQNSTKRSIKERLMKLLPCSAAKTSSPAIQNSVEDELEMATVRHRPEALELLEAQSKFTKKELQILYRGFKNECPSGVVNEETFKEIYSQFFPQGDSTTYAHFLFNAFDTDHNGAVSFEDFIKGLSILLRGTVQEKLNWAFNLYDINKDGYITKEEMLDIMKAIYDMMGKCTYPVLKEDAPRQHVETFFQKMDKNKDGVVTIDEFIESCQKDENIMRSMQLFENVI</sequence>
<keyword id="KW-0025">Alternative splicing</keyword>
<keyword id="KW-0106">Calcium</keyword>
<keyword id="KW-1003">Cell membrane</keyword>
<keyword id="KW-0963">Cytoplasm</keyword>
<keyword id="KW-0407">Ion channel</keyword>
<keyword id="KW-0406">Ion transport</keyword>
<keyword id="KW-0472">Membrane</keyword>
<keyword id="KW-0479">Metal-binding</keyword>
<keyword id="KW-0576">Peroxisome</keyword>
<keyword id="KW-0597">Phosphoprotein</keyword>
<keyword id="KW-0630">Potassium</keyword>
<keyword id="KW-0631">Potassium channel</keyword>
<keyword id="KW-0633">Potassium transport</keyword>
<keyword id="KW-1185">Reference proteome</keyword>
<keyword id="KW-0677">Repeat</keyword>
<keyword id="KW-0813">Transport</keyword>
<keyword id="KW-0851">Voltage-gated channel</keyword>
<name>KCIP4_MACFA</name>
<feature type="chain" id="PRO_0000073826" description="Kv channel-interacting protein 4">
    <location>
        <begin position="1"/>
        <end position="250"/>
    </location>
</feature>
<feature type="domain" description="EF-hand 1; degenerate" evidence="6">
    <location>
        <begin position="61"/>
        <end position="117"/>
    </location>
</feature>
<feature type="domain" description="EF-hand 2" evidence="5">
    <location>
        <begin position="120"/>
        <end position="155"/>
    </location>
</feature>
<feature type="domain" description="EF-hand 3" evidence="5">
    <location>
        <begin position="156"/>
        <end position="191"/>
    </location>
</feature>
<feature type="domain" description="EF-hand 4" evidence="5">
    <location>
        <begin position="204"/>
        <end position="239"/>
    </location>
</feature>
<feature type="region of interest" description="KIS" evidence="1">
    <location>
        <begin position="2"/>
        <end position="44"/>
    </location>
</feature>
<feature type="region of interest" description="Interaction with KCND2" evidence="4">
    <location>
        <begin position="237"/>
        <end position="250"/>
    </location>
</feature>
<feature type="binding site" evidence="5">
    <location>
        <position position="133"/>
    </location>
    <ligand>
        <name>Ca(2+)</name>
        <dbReference type="ChEBI" id="CHEBI:29108"/>
        <label>1</label>
    </ligand>
</feature>
<feature type="binding site" evidence="5">
    <location>
        <position position="135"/>
    </location>
    <ligand>
        <name>Ca(2+)</name>
        <dbReference type="ChEBI" id="CHEBI:29108"/>
        <label>1</label>
    </ligand>
</feature>
<feature type="binding site" evidence="5">
    <location>
        <position position="137"/>
    </location>
    <ligand>
        <name>Ca(2+)</name>
        <dbReference type="ChEBI" id="CHEBI:29108"/>
        <label>1</label>
    </ligand>
</feature>
<feature type="binding site" evidence="5">
    <location>
        <position position="144"/>
    </location>
    <ligand>
        <name>Ca(2+)</name>
        <dbReference type="ChEBI" id="CHEBI:29108"/>
        <label>1</label>
    </ligand>
</feature>
<feature type="binding site" evidence="5">
    <location>
        <position position="169"/>
    </location>
    <ligand>
        <name>Ca(2+)</name>
        <dbReference type="ChEBI" id="CHEBI:29108"/>
        <label>2</label>
    </ligand>
</feature>
<feature type="binding site" evidence="5">
    <location>
        <position position="171"/>
    </location>
    <ligand>
        <name>Ca(2+)</name>
        <dbReference type="ChEBI" id="CHEBI:29108"/>
        <label>2</label>
    </ligand>
</feature>
<feature type="binding site" evidence="5">
    <location>
        <position position="173"/>
    </location>
    <ligand>
        <name>Ca(2+)</name>
        <dbReference type="ChEBI" id="CHEBI:29108"/>
        <label>2</label>
    </ligand>
</feature>
<feature type="binding site" evidence="5">
    <location>
        <position position="175"/>
    </location>
    <ligand>
        <name>Ca(2+)</name>
        <dbReference type="ChEBI" id="CHEBI:29108"/>
        <label>2</label>
    </ligand>
</feature>
<feature type="binding site" evidence="5">
    <location>
        <position position="180"/>
    </location>
    <ligand>
        <name>Ca(2+)</name>
        <dbReference type="ChEBI" id="CHEBI:29108"/>
        <label>2</label>
    </ligand>
</feature>
<feature type="binding site" evidence="5">
    <location>
        <position position="217"/>
    </location>
    <ligand>
        <name>Ca(2+)</name>
        <dbReference type="ChEBI" id="CHEBI:29108"/>
        <label>3</label>
    </ligand>
</feature>
<feature type="binding site" evidence="5">
    <location>
        <position position="219"/>
    </location>
    <ligand>
        <name>Ca(2+)</name>
        <dbReference type="ChEBI" id="CHEBI:29108"/>
        <label>3</label>
    </ligand>
</feature>
<feature type="binding site" evidence="5">
    <location>
        <position position="221"/>
    </location>
    <ligand>
        <name>Ca(2+)</name>
        <dbReference type="ChEBI" id="CHEBI:29108"/>
        <label>3</label>
    </ligand>
</feature>
<feature type="binding site" evidence="5">
    <location>
        <position position="228"/>
    </location>
    <ligand>
        <name>Ca(2+)</name>
        <dbReference type="ChEBI" id="CHEBI:29108"/>
        <label>3</label>
    </ligand>
</feature>
<feature type="modified residue" description="Phosphoserine" evidence="2">
    <location>
        <position position="17"/>
    </location>
</feature>
<feature type="modified residue" description="Phosphoserine" evidence="2">
    <location>
        <position position="56"/>
    </location>
</feature>
<accession>Q8HYN7</accession>
<protein>
    <recommendedName>
        <fullName>Kv channel-interacting protein 4</fullName>
        <shortName>KChIP4</shortName>
    </recommendedName>
    <alternativeName>
        <fullName>A-type potassium channel modulatory protein 4</fullName>
    </alternativeName>
    <alternativeName>
        <fullName>Potassium channel-interacting protein 4</fullName>
    </alternativeName>
</protein>
<organism>
    <name type="scientific">Macaca fascicularis</name>
    <name type="common">Crab-eating macaque</name>
    <name type="synonym">Cynomolgus monkey</name>
    <dbReference type="NCBI Taxonomy" id="9541"/>
    <lineage>
        <taxon>Eukaryota</taxon>
        <taxon>Metazoa</taxon>
        <taxon>Chordata</taxon>
        <taxon>Craniata</taxon>
        <taxon>Vertebrata</taxon>
        <taxon>Euteleostomi</taxon>
        <taxon>Mammalia</taxon>
        <taxon>Eutheria</taxon>
        <taxon>Euarchontoglires</taxon>
        <taxon>Primates</taxon>
        <taxon>Haplorrhini</taxon>
        <taxon>Catarrhini</taxon>
        <taxon>Cercopithecidae</taxon>
        <taxon>Cercopithecinae</taxon>
        <taxon>Macaca</taxon>
    </lineage>
</organism>
<comment type="function">
    <text evidence="2 3">Regulatory subunit of Kv4/D (Shal)-type voltage-gated rapidly inactivating A-type potassium channels. Modulates KCND2 channel density, inactivation kinetics and rate of recovery from inactivation in a calcium-dependent and isoform-specific manner. Modulates KCND3/Kv4.3 currents. Isoform 4 does not increase KCND2 expression at the cell membrane. Isoform 4 retains KCND3 in the endoplasmic reticulum and negatively regulates its expression at the cell membrane.</text>
</comment>
<comment type="subunit">
    <text evidence="2 3">Component of heteromultimeric potassium channels (By similarity). Identified in potassium channel complexes containing KCND1, KCND2, KCND3, KCNIP1, KCNIP2, KCNIP3, KCNIP4, DPP6 and DPP10 (By similarity). Interacts with KCND2 (By similarity). Interacts with KCND3 (By similarity). Interacts with the C-terminus of PSEN2 and probably PSEN1 (By similarity).</text>
</comment>
<comment type="subcellular location">
    <subcellularLocation>
        <location evidence="3">Cell membrane</location>
        <topology evidence="3">Peripheral membrane protein</topology>
    </subcellularLocation>
    <subcellularLocation>
        <location evidence="3">Cytoplasm</location>
    </subcellularLocation>
    <subcellularLocation>
        <location evidence="3">Peroxisome</location>
    </subcellularLocation>
</comment>
<comment type="alternative products">
    <event type="alternative splicing"/>
    <isoform>
        <id>Q8HYN7-1</id>
        <name>1</name>
        <name>B long</name>
        <sequence type="displayed"/>
    </isoform>
    <text>Additional isoforms seem to exist.</text>
</comment>
<comment type="domain">
    <text evidence="2">The KIS (K-channel inactivation suppressor) domain is required for converting A-type Kv4 current to a slowly inactivating delayed rectifier potassium current.</text>
</comment>
<comment type="similarity">
    <text evidence="6">Belongs to the recoverin family.</text>
</comment>
<proteinExistence type="evidence at transcript level"/>
<gene>
    <name type="primary">KCNIP4</name>
    <name type="synonym">KCHIP4</name>
</gene>
<dbReference type="EMBL" id="AF453247">
    <property type="protein sequence ID" value="AAN76994.1"/>
    <property type="molecule type" value="mRNA"/>
</dbReference>
<dbReference type="RefSeq" id="XP_005554619.1">
    <molecule id="Q8HYN7-1"/>
    <property type="nucleotide sequence ID" value="XM_005554562.4"/>
</dbReference>
<dbReference type="BMRB" id="Q8HYN7"/>
<dbReference type="SMR" id="Q8HYN7"/>
<dbReference type="STRING" id="9541.ENSMFAP00000031465"/>
<dbReference type="Ensembl" id="ENSMFAT00000005655.2">
    <molecule id="Q8HYN7-1"/>
    <property type="protein sequence ID" value="ENSMFAP00000031439.2"/>
    <property type="gene ID" value="ENSMFAG00000042661.2"/>
</dbReference>
<dbReference type="GeneID" id="101925572"/>
<dbReference type="KEGG" id="mcf:101925572"/>
<dbReference type="CTD" id="80333"/>
<dbReference type="VEuPathDB" id="HostDB:ENSMFAG00000042661"/>
<dbReference type="eggNOG" id="KOG0044">
    <property type="taxonomic scope" value="Eukaryota"/>
</dbReference>
<dbReference type="GeneTree" id="ENSGT00940000158985"/>
<dbReference type="OrthoDB" id="191686at2759"/>
<dbReference type="Proteomes" id="UP000233100">
    <property type="component" value="Chromosome 5"/>
</dbReference>
<dbReference type="Bgee" id="ENSMFAG00000042661">
    <property type="expression patterns" value="Expressed in cerebellum and 13 other cell types or tissues"/>
</dbReference>
<dbReference type="GO" id="GO:0005829">
    <property type="term" value="C:cytosol"/>
    <property type="evidence" value="ECO:0000250"/>
    <property type="project" value="UniProtKB"/>
</dbReference>
<dbReference type="GO" id="GO:0005777">
    <property type="term" value="C:peroxisome"/>
    <property type="evidence" value="ECO:0000250"/>
    <property type="project" value="UniProtKB"/>
</dbReference>
<dbReference type="GO" id="GO:0005886">
    <property type="term" value="C:plasma membrane"/>
    <property type="evidence" value="ECO:0000250"/>
    <property type="project" value="UniProtKB"/>
</dbReference>
<dbReference type="GO" id="GO:0008076">
    <property type="term" value="C:voltage-gated potassium channel complex"/>
    <property type="evidence" value="ECO:0000250"/>
    <property type="project" value="UniProtKB"/>
</dbReference>
<dbReference type="GO" id="GO:0005509">
    <property type="term" value="F:calcium ion binding"/>
    <property type="evidence" value="ECO:0000250"/>
    <property type="project" value="UniProtKB"/>
</dbReference>
<dbReference type="GO" id="GO:0005267">
    <property type="term" value="F:potassium channel activity"/>
    <property type="evidence" value="ECO:0007669"/>
    <property type="project" value="UniProtKB-KW"/>
</dbReference>
<dbReference type="GO" id="GO:0015459">
    <property type="term" value="F:potassium channel regulator activity"/>
    <property type="evidence" value="ECO:0000250"/>
    <property type="project" value="UniProtKB"/>
</dbReference>
<dbReference type="GO" id="GO:0072659">
    <property type="term" value="P:protein localization to plasma membrane"/>
    <property type="evidence" value="ECO:0000250"/>
    <property type="project" value="UniProtKB"/>
</dbReference>
<dbReference type="GO" id="GO:1901379">
    <property type="term" value="P:regulation of potassium ion transmembrane transport"/>
    <property type="evidence" value="ECO:0000250"/>
    <property type="project" value="UniProtKB"/>
</dbReference>
<dbReference type="CDD" id="cd00051">
    <property type="entry name" value="EFh"/>
    <property type="match status" value="2"/>
</dbReference>
<dbReference type="FunFam" id="1.10.238.10:FF:000043">
    <property type="entry name" value="Kv channel-interacting protein 1 isoform 2"/>
    <property type="match status" value="1"/>
</dbReference>
<dbReference type="Gene3D" id="1.10.238.10">
    <property type="entry name" value="EF-hand"/>
    <property type="match status" value="1"/>
</dbReference>
<dbReference type="InterPro" id="IPR011992">
    <property type="entry name" value="EF-hand-dom_pair"/>
</dbReference>
<dbReference type="InterPro" id="IPR018247">
    <property type="entry name" value="EF_Hand_1_Ca_BS"/>
</dbReference>
<dbReference type="InterPro" id="IPR002048">
    <property type="entry name" value="EF_hand_dom"/>
</dbReference>
<dbReference type="InterPro" id="IPR028846">
    <property type="entry name" value="Recoverin"/>
</dbReference>
<dbReference type="PANTHER" id="PTHR23055">
    <property type="entry name" value="CALCIUM BINDING PROTEINS"/>
    <property type="match status" value="1"/>
</dbReference>
<dbReference type="PANTHER" id="PTHR23055:SF30">
    <property type="entry name" value="KV CHANNEL-INTERACTING PROTEIN 4"/>
    <property type="match status" value="1"/>
</dbReference>
<dbReference type="Pfam" id="PF13499">
    <property type="entry name" value="EF-hand_7"/>
    <property type="match status" value="1"/>
</dbReference>
<dbReference type="Pfam" id="PF13833">
    <property type="entry name" value="EF-hand_8"/>
    <property type="match status" value="1"/>
</dbReference>
<dbReference type="PRINTS" id="PR00450">
    <property type="entry name" value="RECOVERIN"/>
</dbReference>
<dbReference type="SMART" id="SM00054">
    <property type="entry name" value="EFh"/>
    <property type="match status" value="3"/>
</dbReference>
<dbReference type="SUPFAM" id="SSF47473">
    <property type="entry name" value="EF-hand"/>
    <property type="match status" value="1"/>
</dbReference>
<dbReference type="PROSITE" id="PS00018">
    <property type="entry name" value="EF_HAND_1"/>
    <property type="match status" value="3"/>
</dbReference>
<dbReference type="PROSITE" id="PS50222">
    <property type="entry name" value="EF_HAND_2"/>
    <property type="match status" value="3"/>
</dbReference>